<feature type="chain" id="PRO_0000105059" description="Integration host factor subunit beta">
    <location>
        <begin position="1"/>
        <end position="94"/>
    </location>
</feature>
<organism>
    <name type="scientific">Pseudomonas aeruginosa (strain ATCC 15692 / DSM 22644 / CIP 104116 / JCM 14847 / LMG 12228 / 1C / PRS 101 / PAO1)</name>
    <dbReference type="NCBI Taxonomy" id="208964"/>
    <lineage>
        <taxon>Bacteria</taxon>
        <taxon>Pseudomonadati</taxon>
        <taxon>Pseudomonadota</taxon>
        <taxon>Gammaproteobacteria</taxon>
        <taxon>Pseudomonadales</taxon>
        <taxon>Pseudomonadaceae</taxon>
        <taxon>Pseudomonas</taxon>
    </lineage>
</organism>
<dbReference type="EMBL" id="L35259">
    <property type="protein sequence ID" value="AAA65950.1"/>
    <property type="molecule type" value="Genomic_DNA"/>
</dbReference>
<dbReference type="EMBL" id="AF035937">
    <property type="protein sequence ID" value="AAF23995.1"/>
    <property type="molecule type" value="Genomic_DNA"/>
</dbReference>
<dbReference type="EMBL" id="AF147795">
    <property type="protein sequence ID" value="AAD45260.1"/>
    <property type="molecule type" value="Genomic_DNA"/>
</dbReference>
<dbReference type="EMBL" id="AF236052">
    <property type="protein sequence ID" value="AAF72950.1"/>
    <property type="molecule type" value="Genomic_DNA"/>
</dbReference>
<dbReference type="EMBL" id="AE004091">
    <property type="protein sequence ID" value="AAG06549.1"/>
    <property type="molecule type" value="Genomic_DNA"/>
</dbReference>
<dbReference type="PIR" id="JC4063">
    <property type="entry name" value="JC4063"/>
</dbReference>
<dbReference type="RefSeq" id="NP_251851.1">
    <property type="nucleotide sequence ID" value="NC_002516.2"/>
</dbReference>
<dbReference type="RefSeq" id="WP_003091441.1">
    <property type="nucleotide sequence ID" value="NZ_QZGE01000023.1"/>
</dbReference>
<dbReference type="SMR" id="Q51473"/>
<dbReference type="FunCoup" id="Q51473">
    <property type="interactions" value="325"/>
</dbReference>
<dbReference type="STRING" id="208964.PA3161"/>
<dbReference type="PaxDb" id="208964-PA3161"/>
<dbReference type="DNASU" id="882561"/>
<dbReference type="GeneID" id="79914974"/>
<dbReference type="GeneID" id="882561"/>
<dbReference type="KEGG" id="pae:PA3161"/>
<dbReference type="PATRIC" id="fig|208964.12.peg.3304"/>
<dbReference type="PseudoCAP" id="PA3161"/>
<dbReference type="HOGENOM" id="CLU_105066_2_0_6"/>
<dbReference type="InParanoid" id="Q51473"/>
<dbReference type="OrthoDB" id="9804203at2"/>
<dbReference type="PhylomeDB" id="Q51473"/>
<dbReference type="BioCyc" id="PAER208964:G1FZ6-3221-MONOMER"/>
<dbReference type="Proteomes" id="UP000002438">
    <property type="component" value="Chromosome"/>
</dbReference>
<dbReference type="GO" id="GO:0005694">
    <property type="term" value="C:chromosome"/>
    <property type="evidence" value="ECO:0007669"/>
    <property type="project" value="InterPro"/>
</dbReference>
<dbReference type="GO" id="GO:0005829">
    <property type="term" value="C:cytosol"/>
    <property type="evidence" value="ECO:0000318"/>
    <property type="project" value="GO_Central"/>
</dbReference>
<dbReference type="GO" id="GO:0003677">
    <property type="term" value="F:DNA binding"/>
    <property type="evidence" value="ECO:0000318"/>
    <property type="project" value="GO_Central"/>
</dbReference>
<dbReference type="GO" id="GO:0030527">
    <property type="term" value="F:structural constituent of chromatin"/>
    <property type="evidence" value="ECO:0007669"/>
    <property type="project" value="InterPro"/>
</dbReference>
<dbReference type="GO" id="GO:0006310">
    <property type="term" value="P:DNA recombination"/>
    <property type="evidence" value="ECO:0007669"/>
    <property type="project" value="UniProtKB-UniRule"/>
</dbReference>
<dbReference type="GO" id="GO:0006355">
    <property type="term" value="P:regulation of DNA-templated transcription"/>
    <property type="evidence" value="ECO:0007669"/>
    <property type="project" value="UniProtKB-UniRule"/>
</dbReference>
<dbReference type="GO" id="GO:0006417">
    <property type="term" value="P:regulation of translation"/>
    <property type="evidence" value="ECO:0007669"/>
    <property type="project" value="UniProtKB-UniRule"/>
</dbReference>
<dbReference type="CDD" id="cd13836">
    <property type="entry name" value="IHF_B"/>
    <property type="match status" value="1"/>
</dbReference>
<dbReference type="FunFam" id="4.10.520.10:FF:000003">
    <property type="entry name" value="Integration host factor subunit beta"/>
    <property type="match status" value="1"/>
</dbReference>
<dbReference type="Gene3D" id="4.10.520.10">
    <property type="entry name" value="IHF-like DNA-binding proteins"/>
    <property type="match status" value="1"/>
</dbReference>
<dbReference type="HAMAP" id="MF_00381">
    <property type="entry name" value="IHF_beta"/>
    <property type="match status" value="1"/>
</dbReference>
<dbReference type="InterPro" id="IPR000119">
    <property type="entry name" value="Hist_DNA-bd"/>
</dbReference>
<dbReference type="InterPro" id="IPR020816">
    <property type="entry name" value="Histone-like_DNA-bd_CS"/>
</dbReference>
<dbReference type="InterPro" id="IPR010992">
    <property type="entry name" value="IHF-like_DNA-bd_dom_sf"/>
</dbReference>
<dbReference type="InterPro" id="IPR005685">
    <property type="entry name" value="IHF_beta"/>
</dbReference>
<dbReference type="NCBIfam" id="TIGR00988">
    <property type="entry name" value="hip"/>
    <property type="match status" value="1"/>
</dbReference>
<dbReference type="NCBIfam" id="NF001222">
    <property type="entry name" value="PRK00199.1"/>
    <property type="match status" value="1"/>
</dbReference>
<dbReference type="PANTHER" id="PTHR33175">
    <property type="entry name" value="DNA-BINDING PROTEIN HU"/>
    <property type="match status" value="1"/>
</dbReference>
<dbReference type="PANTHER" id="PTHR33175:SF5">
    <property type="entry name" value="INTEGRATION HOST FACTOR SUBUNIT BETA"/>
    <property type="match status" value="1"/>
</dbReference>
<dbReference type="Pfam" id="PF00216">
    <property type="entry name" value="Bac_DNA_binding"/>
    <property type="match status" value="1"/>
</dbReference>
<dbReference type="PRINTS" id="PR01727">
    <property type="entry name" value="DNABINDINGHU"/>
</dbReference>
<dbReference type="SMART" id="SM00411">
    <property type="entry name" value="BHL"/>
    <property type="match status" value="1"/>
</dbReference>
<dbReference type="SUPFAM" id="SSF47729">
    <property type="entry name" value="IHF-like DNA-binding proteins"/>
    <property type="match status" value="1"/>
</dbReference>
<dbReference type="PROSITE" id="PS00045">
    <property type="entry name" value="HISTONE_LIKE"/>
    <property type="match status" value="1"/>
</dbReference>
<evidence type="ECO:0000250" key="1"/>
<evidence type="ECO:0000305" key="2"/>
<protein>
    <recommendedName>
        <fullName>Integration host factor subunit beta</fullName>
        <shortName>IHF-beta</shortName>
    </recommendedName>
</protein>
<proteinExistence type="inferred from homology"/>
<comment type="function">
    <text evidence="1">This protein is one of the two subunits of integration host factor, a specific DNA-binding protein that functions in genetic recombination as well as in transcriptional and translational control.</text>
</comment>
<comment type="subunit">
    <text>Heterodimer of an alpha and a beta chain.</text>
</comment>
<comment type="similarity">
    <text evidence="2">Belongs to the bacterial histone-like protein family.</text>
</comment>
<reference key="1">
    <citation type="journal article" date="1995" name="Gene">
        <title>Cloning and sequence analyses of the genes coding for the integration host factor (IHF) and HU proteins of Pseudomonas aeruginosa.</title>
        <authorList>
            <person name="Delic-Attree I."/>
            <person name="Toussaint B."/>
            <person name="Vignais P.M."/>
        </authorList>
    </citation>
    <scope>NUCLEOTIDE SEQUENCE [GENOMIC DNA]</scope>
</reference>
<reference key="2">
    <citation type="journal article" date="1999" name="Microbiology">
        <title>Functional analysis of genes responsible for the synthesis of the B-band O antigen of Pseudomonas aeruginosa serotype O6 lipopolysaccharide.</title>
        <authorList>
            <person name="Belanger M."/>
            <person name="Burrows L.L."/>
            <person name="Lam J.S."/>
        </authorList>
    </citation>
    <scope>NUCLEOTIDE SEQUENCE [GENOMIC DNA]</scope>
    <source>
        <strain>IATS O6</strain>
    </source>
</reference>
<reference key="3">
    <citation type="journal article" date="1999" name="J. Bacteriol.">
        <title>Characterization of the serogroup O11 O-antigen locus of Pseudomonas aeruginosa PA103.</title>
        <authorList>
            <person name="Dean C.R."/>
            <person name="Franklund C.V."/>
            <person name="Retief J.D."/>
            <person name="Coyne M.J. Jr."/>
            <person name="Hatano K."/>
            <person name="Evans D.J."/>
            <person name="Pier G.B."/>
            <person name="Goldberg J.B."/>
        </authorList>
    </citation>
    <scope>NUCLEOTIDE SEQUENCE [GENOMIC DNA]</scope>
    <source>
        <strain>ATCC 29260 / PA103</strain>
    </source>
</reference>
<reference key="4">
    <citation type="journal article" date="2000" name="FEMS Microbiol. Lett.">
        <title>The wbpM gene in Pseudomonas aeruginosa serogroup O17 resides on a cryptic copy of the serogroup O11 O antigen gene locus.</title>
        <authorList>
            <person name="Dean C.R."/>
            <person name="Goldberg J.B."/>
        </authorList>
    </citation>
    <scope>NUCLEOTIDE SEQUENCE [GENOMIC DNA]</scope>
    <source>
        <strain>PAO17</strain>
    </source>
</reference>
<reference key="5">
    <citation type="journal article" date="2000" name="Nature">
        <title>Complete genome sequence of Pseudomonas aeruginosa PAO1, an opportunistic pathogen.</title>
        <authorList>
            <person name="Stover C.K."/>
            <person name="Pham X.-Q.T."/>
            <person name="Erwin A.L."/>
            <person name="Mizoguchi S.D."/>
            <person name="Warrener P."/>
            <person name="Hickey M.J."/>
            <person name="Brinkman F.S.L."/>
            <person name="Hufnagle W.O."/>
            <person name="Kowalik D.J."/>
            <person name="Lagrou M."/>
            <person name="Garber R.L."/>
            <person name="Goltry L."/>
            <person name="Tolentino E."/>
            <person name="Westbrock-Wadman S."/>
            <person name="Yuan Y."/>
            <person name="Brody L.L."/>
            <person name="Coulter S.N."/>
            <person name="Folger K.R."/>
            <person name="Kas A."/>
            <person name="Larbig K."/>
            <person name="Lim R.M."/>
            <person name="Smith K.A."/>
            <person name="Spencer D.H."/>
            <person name="Wong G.K.-S."/>
            <person name="Wu Z."/>
            <person name="Paulsen I.T."/>
            <person name="Reizer J."/>
            <person name="Saier M.H. Jr."/>
            <person name="Hancock R.E.W."/>
            <person name="Lory S."/>
            <person name="Olson M.V."/>
        </authorList>
    </citation>
    <scope>NUCLEOTIDE SEQUENCE [LARGE SCALE GENOMIC DNA]</scope>
    <source>
        <strain>ATCC 15692 / DSM 22644 / CIP 104116 / JCM 14847 / LMG 12228 / 1C / PRS 101 / PAO1</strain>
    </source>
</reference>
<keyword id="KW-0233">DNA recombination</keyword>
<keyword id="KW-0238">DNA-binding</keyword>
<keyword id="KW-1185">Reference proteome</keyword>
<keyword id="KW-0804">Transcription</keyword>
<keyword id="KW-0805">Transcription regulation</keyword>
<keyword id="KW-0810">Translation regulation</keyword>
<gene>
    <name type="primary">ihfB</name>
    <name type="synonym">himD</name>
    <name type="ordered locus">PA3161</name>
</gene>
<name>IHFB_PSEAE</name>
<sequence>MTKSELIERIVTHQGQLSAKDVELAIKTMLEQMSQALATGDRIEIRGFGSFSLHYRAPRVGRNPKTGESVRLDGKFVPHFKPGKELRDRVNEPE</sequence>
<accession>Q51473</accession>